<feature type="chain" id="PRO_0000118217" description="NADH-quinone oxidoreductase subunit L">
    <location>
        <begin position="1"/>
        <end position="596"/>
    </location>
</feature>
<feature type="transmembrane region" description="Helical" evidence="2">
    <location>
        <begin position="4"/>
        <end position="24"/>
    </location>
</feature>
<feature type="transmembrane region" description="Helical" evidence="2">
    <location>
        <begin position="31"/>
        <end position="51"/>
    </location>
</feature>
<feature type="transmembrane region" description="Helical" evidence="2">
    <location>
        <begin position="80"/>
        <end position="100"/>
    </location>
</feature>
<feature type="transmembrane region" description="Helical" evidence="2">
    <location>
        <begin position="104"/>
        <end position="124"/>
    </location>
</feature>
<feature type="transmembrane region" description="Helical" evidence="2">
    <location>
        <begin position="162"/>
        <end position="182"/>
    </location>
</feature>
<feature type="transmembrane region" description="Helical" evidence="2">
    <location>
        <begin position="204"/>
        <end position="224"/>
    </location>
</feature>
<feature type="transmembrane region" description="Helical" evidence="2">
    <location>
        <begin position="236"/>
        <end position="256"/>
    </location>
</feature>
<feature type="transmembrane region" description="Helical" evidence="2">
    <location>
        <begin position="270"/>
        <end position="290"/>
    </location>
</feature>
<feature type="transmembrane region" description="Helical" evidence="2">
    <location>
        <begin position="305"/>
        <end position="325"/>
    </location>
</feature>
<feature type="transmembrane region" description="Helical" evidence="2">
    <location>
        <begin position="365"/>
        <end position="385"/>
    </location>
</feature>
<feature type="transmembrane region" description="Helical" evidence="2">
    <location>
        <begin position="395"/>
        <end position="415"/>
    </location>
</feature>
<feature type="transmembrane region" description="Helical" evidence="2">
    <location>
        <begin position="441"/>
        <end position="461"/>
    </location>
</feature>
<feature type="transmembrane region" description="Helical" evidence="2">
    <location>
        <begin position="480"/>
        <end position="500"/>
    </location>
</feature>
<feature type="transmembrane region" description="Helical" evidence="2">
    <location>
        <begin position="576"/>
        <end position="596"/>
    </location>
</feature>
<name>NUOL_CAMJE</name>
<evidence type="ECO:0000250" key="1"/>
<evidence type="ECO:0000255" key="2"/>
<evidence type="ECO:0000305" key="3"/>
<sequence length="596" mass="66528">MQNLALISLFSPFVAFLFASCFALSEKKQFVGIICSLLVALSAFCSLYLLFCNEAFNVSLFEWFAGVNFGFDIDAISLTMMSVVGIVATCVHFYSIFYMAHDEGFNKFFAYLGLFVFSMLFLVMSDNFLGLFVGWEGVGLCSWLLIGFWYKNDTYSFAANEAFIMNRIADLGMLLGIFWLYLQAGTLKYDEVFSMAQSLDHNALILIATCLFIGAMGKSAQFPFHTWLADAMAGPTPVSALIHAATMVTAGVYLVIRASTLYDLVPEVSYIIALLGAFVAIFAASMALVVRDLKRIIAYSTLSQLGYMFVAAGLGAYGIALFHLATHAFFKSLLFLGAGNVMHAMNDKLDIKKMGGLFKPLKITAILMCIGSLALAGIYPFAGFFSKDLILGYSFISFHHGIFLVLLIAAFLTAFYSFRLLMLVFFTPARHDEHPHEASKIALLAMSPLMVLAIIAGFFEHSFFEYLSTKLVFIDAQNQIVMICASVAAILGAILAIFAYKNSWFKESIEENKIHKLLSNDYFIPQFYHQFIVSKYESLCAILKHCDLYIFDRIVEKIALYSQNISQKMIMPNSLNLMLRFLVAAFVILLILVWMV</sequence>
<comment type="function">
    <text evidence="1">NDH-1 shuttles electrons from NADH, via FMN and iron-sulfur (Fe-S) centers, to quinones in the respiratory chain. The immediate electron acceptor for the enzyme in this species is believed to be menaquinone. Couples the redox reaction to proton translocation (for every two electrons transferred, four hydrogen ions are translocated across the cytoplasmic membrane), and thus conserves the redox energy in a proton gradient (By similarity).</text>
</comment>
<comment type="catalytic activity">
    <reaction>
        <text>a quinone + NADH + 5 H(+)(in) = a quinol + NAD(+) + 4 H(+)(out)</text>
        <dbReference type="Rhea" id="RHEA:57888"/>
        <dbReference type="ChEBI" id="CHEBI:15378"/>
        <dbReference type="ChEBI" id="CHEBI:24646"/>
        <dbReference type="ChEBI" id="CHEBI:57540"/>
        <dbReference type="ChEBI" id="CHEBI:57945"/>
        <dbReference type="ChEBI" id="CHEBI:132124"/>
    </reaction>
</comment>
<comment type="subcellular location">
    <subcellularLocation>
        <location evidence="3">Cell membrane</location>
        <topology evidence="3">Multi-pass membrane protein</topology>
    </subcellularLocation>
</comment>
<comment type="similarity">
    <text evidence="3">Belongs to the complex I subunit 5 family.</text>
</comment>
<dbReference type="EC" id="7.1.1.-"/>
<dbReference type="EMBL" id="AL111168">
    <property type="protein sequence ID" value="CAL35665.1"/>
    <property type="molecule type" value="Genomic_DNA"/>
</dbReference>
<dbReference type="PIR" id="F81251">
    <property type="entry name" value="F81251"/>
</dbReference>
<dbReference type="RefSeq" id="WP_002851310.1">
    <property type="nucleotide sequence ID" value="NZ_SZUC01000002.1"/>
</dbReference>
<dbReference type="RefSeq" id="YP_002344937.1">
    <property type="nucleotide sequence ID" value="NC_002163.1"/>
</dbReference>
<dbReference type="SMR" id="Q9PMA7"/>
<dbReference type="IntAct" id="Q9PMA7">
    <property type="interactions" value="10"/>
</dbReference>
<dbReference type="STRING" id="192222.Cj1568c"/>
<dbReference type="TCDB" id="3.D.1.7.1">
    <property type="family name" value="the h+ or na+-translocating nadh dehydrogenase (ndh) family"/>
</dbReference>
<dbReference type="PaxDb" id="192222-Cj1568c"/>
<dbReference type="EnsemblBacteria" id="CAL35665">
    <property type="protein sequence ID" value="CAL35665"/>
    <property type="gene ID" value="Cj1568c"/>
</dbReference>
<dbReference type="GeneID" id="905250"/>
<dbReference type="KEGG" id="cje:Cj1568c"/>
<dbReference type="PATRIC" id="fig|192222.6.peg.1544"/>
<dbReference type="eggNOG" id="COG1009">
    <property type="taxonomic scope" value="Bacteria"/>
</dbReference>
<dbReference type="HOGENOM" id="CLU_007100_6_0_7"/>
<dbReference type="OrthoDB" id="9811798at2"/>
<dbReference type="Proteomes" id="UP000000799">
    <property type="component" value="Chromosome"/>
</dbReference>
<dbReference type="GO" id="GO:0005886">
    <property type="term" value="C:plasma membrane"/>
    <property type="evidence" value="ECO:0007669"/>
    <property type="project" value="UniProtKB-SubCell"/>
</dbReference>
<dbReference type="GO" id="GO:0008137">
    <property type="term" value="F:NADH dehydrogenase (ubiquinone) activity"/>
    <property type="evidence" value="ECO:0007669"/>
    <property type="project" value="InterPro"/>
</dbReference>
<dbReference type="GO" id="GO:0048038">
    <property type="term" value="F:quinone binding"/>
    <property type="evidence" value="ECO:0007669"/>
    <property type="project" value="UniProtKB-KW"/>
</dbReference>
<dbReference type="GO" id="GO:0042773">
    <property type="term" value="P:ATP synthesis coupled electron transport"/>
    <property type="evidence" value="ECO:0007669"/>
    <property type="project" value="InterPro"/>
</dbReference>
<dbReference type="GO" id="GO:0015990">
    <property type="term" value="P:electron transport coupled proton transport"/>
    <property type="evidence" value="ECO:0007669"/>
    <property type="project" value="TreeGrafter"/>
</dbReference>
<dbReference type="InterPro" id="IPR018393">
    <property type="entry name" value="NADHpl_OxRdtase_5_subgr"/>
</dbReference>
<dbReference type="InterPro" id="IPR001750">
    <property type="entry name" value="ND/Mrp_TM"/>
</dbReference>
<dbReference type="InterPro" id="IPR003945">
    <property type="entry name" value="NU5C-like"/>
</dbReference>
<dbReference type="InterPro" id="IPR001516">
    <property type="entry name" value="Proton_antipo_N"/>
</dbReference>
<dbReference type="NCBIfam" id="TIGR01974">
    <property type="entry name" value="NDH_I_L"/>
    <property type="match status" value="1"/>
</dbReference>
<dbReference type="NCBIfam" id="NF005141">
    <property type="entry name" value="PRK06590.1"/>
    <property type="match status" value="1"/>
</dbReference>
<dbReference type="PANTHER" id="PTHR42829">
    <property type="entry name" value="NADH-UBIQUINONE OXIDOREDUCTASE CHAIN 5"/>
    <property type="match status" value="1"/>
</dbReference>
<dbReference type="PANTHER" id="PTHR42829:SF2">
    <property type="entry name" value="NADH-UBIQUINONE OXIDOREDUCTASE CHAIN 5"/>
    <property type="match status" value="1"/>
</dbReference>
<dbReference type="Pfam" id="PF00361">
    <property type="entry name" value="Proton_antipo_M"/>
    <property type="match status" value="1"/>
</dbReference>
<dbReference type="Pfam" id="PF00662">
    <property type="entry name" value="Proton_antipo_N"/>
    <property type="match status" value="1"/>
</dbReference>
<dbReference type="PRINTS" id="PR01434">
    <property type="entry name" value="NADHDHGNASE5"/>
</dbReference>
<dbReference type="PRINTS" id="PR01435">
    <property type="entry name" value="NPOXDRDTASE5"/>
</dbReference>
<reference key="1">
    <citation type="journal article" date="2000" name="Nature">
        <title>The genome sequence of the food-borne pathogen Campylobacter jejuni reveals hypervariable sequences.</title>
        <authorList>
            <person name="Parkhill J."/>
            <person name="Wren B.W."/>
            <person name="Mungall K.L."/>
            <person name="Ketley J.M."/>
            <person name="Churcher C.M."/>
            <person name="Basham D."/>
            <person name="Chillingworth T."/>
            <person name="Davies R.M."/>
            <person name="Feltwell T."/>
            <person name="Holroyd S."/>
            <person name="Jagels K."/>
            <person name="Karlyshev A.V."/>
            <person name="Moule S."/>
            <person name="Pallen M.J."/>
            <person name="Penn C.W."/>
            <person name="Quail M.A."/>
            <person name="Rajandream M.A."/>
            <person name="Rutherford K.M."/>
            <person name="van Vliet A.H.M."/>
            <person name="Whitehead S."/>
            <person name="Barrell B.G."/>
        </authorList>
    </citation>
    <scope>NUCLEOTIDE SEQUENCE [LARGE SCALE GENOMIC DNA]</scope>
    <source>
        <strain>ATCC 700819 / NCTC 11168</strain>
    </source>
</reference>
<protein>
    <recommendedName>
        <fullName>NADH-quinone oxidoreductase subunit L</fullName>
        <ecNumber>7.1.1.-</ecNumber>
    </recommendedName>
    <alternativeName>
        <fullName>NADH dehydrogenase I subunit L</fullName>
    </alternativeName>
    <alternativeName>
        <fullName>NDH-1 subunit L</fullName>
    </alternativeName>
</protein>
<gene>
    <name type="primary">nuoL</name>
    <name type="ordered locus">Cj1568c</name>
</gene>
<accession>Q9PMA7</accession>
<accession>Q0P860</accession>
<keyword id="KW-1003">Cell membrane</keyword>
<keyword id="KW-0472">Membrane</keyword>
<keyword id="KW-0520">NAD</keyword>
<keyword id="KW-0874">Quinone</keyword>
<keyword id="KW-1185">Reference proteome</keyword>
<keyword id="KW-1278">Translocase</keyword>
<keyword id="KW-0812">Transmembrane</keyword>
<keyword id="KW-1133">Transmembrane helix</keyword>
<organism>
    <name type="scientific">Campylobacter jejuni subsp. jejuni serotype O:2 (strain ATCC 700819 / NCTC 11168)</name>
    <dbReference type="NCBI Taxonomy" id="192222"/>
    <lineage>
        <taxon>Bacteria</taxon>
        <taxon>Pseudomonadati</taxon>
        <taxon>Campylobacterota</taxon>
        <taxon>Epsilonproteobacteria</taxon>
        <taxon>Campylobacterales</taxon>
        <taxon>Campylobacteraceae</taxon>
        <taxon>Campylobacter</taxon>
    </lineage>
</organism>
<proteinExistence type="inferred from homology"/>